<dbReference type="EC" id="1.14.99.60" evidence="1"/>
<dbReference type="EMBL" id="CP000316">
    <property type="protein sequence ID" value="ABE42701.1"/>
    <property type="status" value="ALT_INIT"/>
    <property type="molecule type" value="Genomic_DNA"/>
</dbReference>
<dbReference type="RefSeq" id="WP_041388313.1">
    <property type="nucleotide sequence ID" value="NC_007948.1"/>
</dbReference>
<dbReference type="SMR" id="Q12FJ1"/>
<dbReference type="STRING" id="296591.Bpro_0745"/>
<dbReference type="KEGG" id="pol:Bpro_0745"/>
<dbReference type="eggNOG" id="COG2941">
    <property type="taxonomic scope" value="Bacteria"/>
</dbReference>
<dbReference type="HOGENOM" id="CLU_088601_0_0_4"/>
<dbReference type="OrthoDB" id="5192789at2"/>
<dbReference type="UniPathway" id="UPA00232"/>
<dbReference type="Proteomes" id="UP000001983">
    <property type="component" value="Chromosome"/>
</dbReference>
<dbReference type="GO" id="GO:0005886">
    <property type="term" value="C:plasma membrane"/>
    <property type="evidence" value="ECO:0007669"/>
    <property type="project" value="UniProtKB-SubCell"/>
</dbReference>
<dbReference type="GO" id="GO:0008682">
    <property type="term" value="F:3-demethoxyubiquinol 3-hydroxylase activity"/>
    <property type="evidence" value="ECO:0007669"/>
    <property type="project" value="UniProtKB-EC"/>
</dbReference>
<dbReference type="GO" id="GO:0046872">
    <property type="term" value="F:metal ion binding"/>
    <property type="evidence" value="ECO:0007669"/>
    <property type="project" value="UniProtKB-KW"/>
</dbReference>
<dbReference type="GO" id="GO:0006744">
    <property type="term" value="P:ubiquinone biosynthetic process"/>
    <property type="evidence" value="ECO:0007669"/>
    <property type="project" value="UniProtKB-UniRule"/>
</dbReference>
<dbReference type="CDD" id="cd01042">
    <property type="entry name" value="DMQH"/>
    <property type="match status" value="1"/>
</dbReference>
<dbReference type="Gene3D" id="1.20.1260.10">
    <property type="match status" value="1"/>
</dbReference>
<dbReference type="HAMAP" id="MF_01658">
    <property type="entry name" value="COQ7"/>
    <property type="match status" value="1"/>
</dbReference>
<dbReference type="InterPro" id="IPR047809">
    <property type="entry name" value="COQ7_proteobact"/>
</dbReference>
<dbReference type="InterPro" id="IPR012347">
    <property type="entry name" value="Ferritin-like"/>
</dbReference>
<dbReference type="InterPro" id="IPR009078">
    <property type="entry name" value="Ferritin-like_SF"/>
</dbReference>
<dbReference type="InterPro" id="IPR011566">
    <property type="entry name" value="Ubq_synth_Coq7"/>
</dbReference>
<dbReference type="NCBIfam" id="NF033656">
    <property type="entry name" value="DMQ_monoox_COQ7"/>
    <property type="match status" value="1"/>
</dbReference>
<dbReference type="PANTHER" id="PTHR11237:SF4">
    <property type="entry name" value="5-DEMETHOXYUBIQUINONE HYDROXYLASE, MITOCHONDRIAL"/>
    <property type="match status" value="1"/>
</dbReference>
<dbReference type="PANTHER" id="PTHR11237">
    <property type="entry name" value="COENZYME Q10 BIOSYNTHESIS PROTEIN 7"/>
    <property type="match status" value="1"/>
</dbReference>
<dbReference type="Pfam" id="PF03232">
    <property type="entry name" value="COQ7"/>
    <property type="match status" value="1"/>
</dbReference>
<dbReference type="SUPFAM" id="SSF47240">
    <property type="entry name" value="Ferritin-like"/>
    <property type="match status" value="1"/>
</dbReference>
<gene>
    <name evidence="1" type="primary">coq7</name>
    <name type="ordered locus">Bpro_0745</name>
</gene>
<keyword id="KW-1003">Cell membrane</keyword>
<keyword id="KW-0408">Iron</keyword>
<keyword id="KW-0472">Membrane</keyword>
<keyword id="KW-0479">Metal-binding</keyword>
<keyword id="KW-0503">Monooxygenase</keyword>
<keyword id="KW-0560">Oxidoreductase</keyword>
<keyword id="KW-1185">Reference proteome</keyword>
<keyword id="KW-0831">Ubiquinone biosynthesis</keyword>
<sequence>MTPALDTALNAADGALRTLFAKPQASRTCPTVAGQRTELSTQEKALSGALMRVNHVGEVCAQALYAAQAVTTRDPALRRHFLAASREEGDHLAWTRERLDELGARPSLLNPLWYAGAFGLGLLAGRLGDRVSLGFVVETERQVEAHLASHLERLPEGDHDSRAIVAQMKDDEARHAQDAQNAGALPMPAPVKALMQASARLMTTTAHYL</sequence>
<organism>
    <name type="scientific">Polaromonas sp. (strain JS666 / ATCC BAA-500)</name>
    <dbReference type="NCBI Taxonomy" id="296591"/>
    <lineage>
        <taxon>Bacteria</taxon>
        <taxon>Pseudomonadati</taxon>
        <taxon>Pseudomonadota</taxon>
        <taxon>Betaproteobacteria</taxon>
        <taxon>Burkholderiales</taxon>
        <taxon>Comamonadaceae</taxon>
        <taxon>Polaromonas</taxon>
    </lineage>
</organism>
<feature type="chain" id="PRO_0000338705" description="3-demethoxyubiquinol 3-hydroxylase">
    <location>
        <begin position="1"/>
        <end position="209"/>
    </location>
</feature>
<feature type="binding site" evidence="1">
    <location>
        <position position="58"/>
    </location>
    <ligand>
        <name>Fe cation</name>
        <dbReference type="ChEBI" id="CHEBI:24875"/>
        <label>1</label>
    </ligand>
</feature>
<feature type="binding site" evidence="1">
    <location>
        <position position="88"/>
    </location>
    <ligand>
        <name>Fe cation</name>
        <dbReference type="ChEBI" id="CHEBI:24875"/>
        <label>1</label>
    </ligand>
</feature>
<feature type="binding site" evidence="1">
    <location>
        <position position="88"/>
    </location>
    <ligand>
        <name>Fe cation</name>
        <dbReference type="ChEBI" id="CHEBI:24875"/>
        <label>2</label>
    </ligand>
</feature>
<feature type="binding site" evidence="1">
    <location>
        <position position="91"/>
    </location>
    <ligand>
        <name>Fe cation</name>
        <dbReference type="ChEBI" id="CHEBI:24875"/>
        <label>1</label>
    </ligand>
</feature>
<feature type="binding site" evidence="1">
    <location>
        <position position="140"/>
    </location>
    <ligand>
        <name>Fe cation</name>
        <dbReference type="ChEBI" id="CHEBI:24875"/>
        <label>2</label>
    </ligand>
</feature>
<feature type="binding site" evidence="1">
    <location>
        <position position="172"/>
    </location>
    <ligand>
        <name>Fe cation</name>
        <dbReference type="ChEBI" id="CHEBI:24875"/>
        <label>1</label>
    </ligand>
</feature>
<feature type="binding site" evidence="1">
    <location>
        <position position="172"/>
    </location>
    <ligand>
        <name>Fe cation</name>
        <dbReference type="ChEBI" id="CHEBI:24875"/>
        <label>2</label>
    </ligand>
</feature>
<feature type="binding site" evidence="1">
    <location>
        <position position="175"/>
    </location>
    <ligand>
        <name>Fe cation</name>
        <dbReference type="ChEBI" id="CHEBI:24875"/>
        <label>2</label>
    </ligand>
</feature>
<evidence type="ECO:0000255" key="1">
    <source>
        <dbReference type="HAMAP-Rule" id="MF_01658"/>
    </source>
</evidence>
<evidence type="ECO:0000305" key="2"/>
<name>COQ7_POLSJ</name>
<accession>Q12FJ1</accession>
<proteinExistence type="inferred from homology"/>
<protein>
    <recommendedName>
        <fullName evidence="1">3-demethoxyubiquinol 3-hydroxylase</fullName>
        <shortName evidence="1">DMQ hydroxylase</shortName>
        <ecNumber evidence="1">1.14.99.60</ecNumber>
    </recommendedName>
    <alternativeName>
        <fullName evidence="1">2-nonaprenyl-3-methyl-6-methoxy-1,4-benzoquinol hydroxylase</fullName>
    </alternativeName>
</protein>
<comment type="function">
    <text evidence="1">Catalyzes the hydroxylation of 2-nonaprenyl-3-methyl-6-methoxy-1,4-benzoquinol during ubiquinone biosynthesis.</text>
</comment>
<comment type="catalytic activity">
    <reaction evidence="1">
        <text>a 5-methoxy-2-methyl-3-(all-trans-polyprenyl)benzene-1,4-diol + AH2 + O2 = a 3-demethylubiquinol + A + H2O</text>
        <dbReference type="Rhea" id="RHEA:50908"/>
        <dbReference type="Rhea" id="RHEA-COMP:10859"/>
        <dbReference type="Rhea" id="RHEA-COMP:10914"/>
        <dbReference type="ChEBI" id="CHEBI:13193"/>
        <dbReference type="ChEBI" id="CHEBI:15377"/>
        <dbReference type="ChEBI" id="CHEBI:15379"/>
        <dbReference type="ChEBI" id="CHEBI:17499"/>
        <dbReference type="ChEBI" id="CHEBI:84167"/>
        <dbReference type="ChEBI" id="CHEBI:84422"/>
        <dbReference type="EC" id="1.14.99.60"/>
    </reaction>
</comment>
<comment type="cofactor">
    <cofactor evidence="1">
        <name>Fe cation</name>
        <dbReference type="ChEBI" id="CHEBI:24875"/>
    </cofactor>
    <text evidence="1">Binds 2 iron ions per subunit.</text>
</comment>
<comment type="pathway">
    <text evidence="1">Cofactor biosynthesis; ubiquinone biosynthesis.</text>
</comment>
<comment type="subcellular location">
    <subcellularLocation>
        <location evidence="1">Cell membrane</location>
        <topology evidence="1">Peripheral membrane protein</topology>
    </subcellularLocation>
</comment>
<comment type="similarity">
    <text evidence="1">Belongs to the COQ7 family.</text>
</comment>
<comment type="sequence caution" evidence="2">
    <conflict type="erroneous initiation">
        <sequence resource="EMBL-CDS" id="ABE42701"/>
    </conflict>
</comment>
<reference key="1">
    <citation type="journal article" date="2008" name="Appl. Environ. Microbiol.">
        <title>The genome of Polaromonas sp. strain JS666: insights into the evolution of a hydrocarbon- and xenobiotic-degrading bacterium, and features of relevance to biotechnology.</title>
        <authorList>
            <person name="Mattes T.E."/>
            <person name="Alexander A.K."/>
            <person name="Richardson P.M."/>
            <person name="Munk A.C."/>
            <person name="Han C.S."/>
            <person name="Stothard P."/>
            <person name="Coleman N.V."/>
        </authorList>
    </citation>
    <scope>NUCLEOTIDE SEQUENCE [LARGE SCALE GENOMIC DNA]</scope>
    <source>
        <strain>JS666 / ATCC BAA-500</strain>
    </source>
</reference>